<proteinExistence type="inferred from homology"/>
<dbReference type="EMBL" id="AL591979">
    <property type="protein sequence ID" value="CAC99547.1"/>
    <property type="molecule type" value="Genomic_DNA"/>
</dbReference>
<dbReference type="PIR" id="AE1258">
    <property type="entry name" value="AE1258"/>
</dbReference>
<dbReference type="RefSeq" id="NP_464994.1">
    <property type="nucleotide sequence ID" value="NC_003210.1"/>
</dbReference>
<dbReference type="RefSeq" id="WP_003719762.1">
    <property type="nucleotide sequence ID" value="NZ_CP149495.1"/>
</dbReference>
<dbReference type="SMR" id="P0DJP1"/>
<dbReference type="STRING" id="169963.gene:17594126"/>
<dbReference type="PaxDb" id="169963-lmo1469"/>
<dbReference type="EnsemblBacteria" id="CAC99547">
    <property type="protein sequence ID" value="CAC99547"/>
    <property type="gene ID" value="CAC99547"/>
</dbReference>
<dbReference type="GeneID" id="93239346"/>
<dbReference type="GeneID" id="987865"/>
<dbReference type="KEGG" id="lmo:lmo1469"/>
<dbReference type="PATRIC" id="fig|169963.11.peg.1509"/>
<dbReference type="eggNOG" id="COG0828">
    <property type="taxonomic scope" value="Bacteria"/>
</dbReference>
<dbReference type="HOGENOM" id="CLU_159258_3_2_9"/>
<dbReference type="OrthoDB" id="9799244at2"/>
<dbReference type="PhylomeDB" id="P0DJP1"/>
<dbReference type="BioCyc" id="LMON169963:LMO1469-MONOMER"/>
<dbReference type="Proteomes" id="UP000000817">
    <property type="component" value="Chromosome"/>
</dbReference>
<dbReference type="GO" id="GO:1990904">
    <property type="term" value="C:ribonucleoprotein complex"/>
    <property type="evidence" value="ECO:0007669"/>
    <property type="project" value="UniProtKB-KW"/>
</dbReference>
<dbReference type="GO" id="GO:0005840">
    <property type="term" value="C:ribosome"/>
    <property type="evidence" value="ECO:0007669"/>
    <property type="project" value="UniProtKB-KW"/>
</dbReference>
<dbReference type="GO" id="GO:0003735">
    <property type="term" value="F:structural constituent of ribosome"/>
    <property type="evidence" value="ECO:0007669"/>
    <property type="project" value="InterPro"/>
</dbReference>
<dbReference type="GO" id="GO:0006412">
    <property type="term" value="P:translation"/>
    <property type="evidence" value="ECO:0007669"/>
    <property type="project" value="UniProtKB-UniRule"/>
</dbReference>
<dbReference type="Gene3D" id="1.20.5.1150">
    <property type="entry name" value="Ribosomal protein S8"/>
    <property type="match status" value="1"/>
</dbReference>
<dbReference type="HAMAP" id="MF_00358">
    <property type="entry name" value="Ribosomal_bS21"/>
    <property type="match status" value="1"/>
</dbReference>
<dbReference type="InterPro" id="IPR001911">
    <property type="entry name" value="Ribosomal_bS21"/>
</dbReference>
<dbReference type="InterPro" id="IPR018278">
    <property type="entry name" value="Ribosomal_bS21_CS"/>
</dbReference>
<dbReference type="InterPro" id="IPR038380">
    <property type="entry name" value="Ribosomal_bS21_sf"/>
</dbReference>
<dbReference type="NCBIfam" id="TIGR00030">
    <property type="entry name" value="S21p"/>
    <property type="match status" value="1"/>
</dbReference>
<dbReference type="PANTHER" id="PTHR21109">
    <property type="entry name" value="MITOCHONDRIAL 28S RIBOSOMAL PROTEIN S21"/>
    <property type="match status" value="1"/>
</dbReference>
<dbReference type="PANTHER" id="PTHR21109:SF22">
    <property type="entry name" value="SMALL RIBOSOMAL SUBUNIT PROTEIN BS21"/>
    <property type="match status" value="1"/>
</dbReference>
<dbReference type="Pfam" id="PF01165">
    <property type="entry name" value="Ribosomal_S21"/>
    <property type="match status" value="1"/>
</dbReference>
<dbReference type="PRINTS" id="PR00976">
    <property type="entry name" value="RIBOSOMALS21"/>
</dbReference>
<dbReference type="PROSITE" id="PS01181">
    <property type="entry name" value="RIBOSOMAL_S21"/>
    <property type="match status" value="1"/>
</dbReference>
<gene>
    <name evidence="1" type="primary">rpsU</name>
    <name type="ordered locus">lmo1469</name>
</gene>
<keyword id="KW-1185">Reference proteome</keyword>
<keyword id="KW-0687">Ribonucleoprotein</keyword>
<keyword id="KW-0689">Ribosomal protein</keyword>
<feature type="chain" id="PRO_0000178351" description="Small ribosomal subunit protein bS21">
    <location>
        <begin position="1"/>
        <end position="57"/>
    </location>
</feature>
<feature type="region of interest" description="Disordered" evidence="2">
    <location>
        <begin position="24"/>
        <end position="57"/>
    </location>
</feature>
<feature type="compositionally biased region" description="Basic and acidic residues" evidence="2">
    <location>
        <begin position="31"/>
        <end position="42"/>
    </location>
</feature>
<feature type="compositionally biased region" description="Basic residues" evidence="2">
    <location>
        <begin position="43"/>
        <end position="57"/>
    </location>
</feature>
<organism>
    <name type="scientific">Listeria monocytogenes serovar 1/2a (strain ATCC BAA-679 / EGD-e)</name>
    <dbReference type="NCBI Taxonomy" id="169963"/>
    <lineage>
        <taxon>Bacteria</taxon>
        <taxon>Bacillati</taxon>
        <taxon>Bacillota</taxon>
        <taxon>Bacilli</taxon>
        <taxon>Bacillales</taxon>
        <taxon>Listeriaceae</taxon>
        <taxon>Listeria</taxon>
    </lineage>
</organism>
<accession>P0DJP1</accession>
<accession>P0A4B9</accession>
<accession>Q9S5A0</accession>
<sequence length="57" mass="6846">MSKTVVRKNESLEDALRRFKRTVSKSGTLQESRKREFYEKPSVKRKKKSEAARKRKF</sequence>
<reference key="1">
    <citation type="journal article" date="2001" name="Science">
        <title>Comparative genomics of Listeria species.</title>
        <authorList>
            <person name="Glaser P."/>
            <person name="Frangeul L."/>
            <person name="Buchrieser C."/>
            <person name="Rusniok C."/>
            <person name="Amend A."/>
            <person name="Baquero F."/>
            <person name="Berche P."/>
            <person name="Bloecker H."/>
            <person name="Brandt P."/>
            <person name="Chakraborty T."/>
            <person name="Charbit A."/>
            <person name="Chetouani F."/>
            <person name="Couve E."/>
            <person name="de Daruvar A."/>
            <person name="Dehoux P."/>
            <person name="Domann E."/>
            <person name="Dominguez-Bernal G."/>
            <person name="Duchaud E."/>
            <person name="Durant L."/>
            <person name="Dussurget O."/>
            <person name="Entian K.-D."/>
            <person name="Fsihi H."/>
            <person name="Garcia-del Portillo F."/>
            <person name="Garrido P."/>
            <person name="Gautier L."/>
            <person name="Goebel W."/>
            <person name="Gomez-Lopez N."/>
            <person name="Hain T."/>
            <person name="Hauf J."/>
            <person name="Jackson D."/>
            <person name="Jones L.-M."/>
            <person name="Kaerst U."/>
            <person name="Kreft J."/>
            <person name="Kuhn M."/>
            <person name="Kunst F."/>
            <person name="Kurapkat G."/>
            <person name="Madueno E."/>
            <person name="Maitournam A."/>
            <person name="Mata Vicente J."/>
            <person name="Ng E."/>
            <person name="Nedjari H."/>
            <person name="Nordsiek G."/>
            <person name="Novella S."/>
            <person name="de Pablos B."/>
            <person name="Perez-Diaz J.-C."/>
            <person name="Purcell R."/>
            <person name="Remmel B."/>
            <person name="Rose M."/>
            <person name="Schlueter T."/>
            <person name="Simoes N."/>
            <person name="Tierrez A."/>
            <person name="Vazquez-Boland J.-A."/>
            <person name="Voss H."/>
            <person name="Wehland J."/>
            <person name="Cossart P."/>
        </authorList>
    </citation>
    <scope>NUCLEOTIDE SEQUENCE [LARGE SCALE GENOMIC DNA]</scope>
    <source>
        <strain>ATCC BAA-679 / EGD-e</strain>
    </source>
</reference>
<evidence type="ECO:0000255" key="1">
    <source>
        <dbReference type="HAMAP-Rule" id="MF_00358"/>
    </source>
</evidence>
<evidence type="ECO:0000256" key="2">
    <source>
        <dbReference type="SAM" id="MobiDB-lite"/>
    </source>
</evidence>
<evidence type="ECO:0000305" key="3"/>
<protein>
    <recommendedName>
        <fullName evidence="1">Small ribosomal subunit protein bS21</fullName>
    </recommendedName>
    <alternativeName>
        <fullName evidence="3">30S ribosomal protein S21</fullName>
    </alternativeName>
</protein>
<name>RS21_LISMO</name>
<comment type="similarity">
    <text evidence="1">Belongs to the bacterial ribosomal protein bS21 family.</text>
</comment>